<accession>Q62F07</accession>
<name>METXS_BURMA</name>
<protein>
    <recommendedName>
        <fullName evidence="1">Homoserine O-succinyltransferase</fullName>
        <shortName evidence="1">HST</shortName>
        <ecNumber evidence="1">2.3.1.46</ecNumber>
    </recommendedName>
    <alternativeName>
        <fullName evidence="1">Homoserine transsuccinylase</fullName>
        <shortName evidence="1">HTS</shortName>
    </alternativeName>
</protein>
<keyword id="KW-0012">Acyltransferase</keyword>
<keyword id="KW-0028">Amino-acid biosynthesis</keyword>
<keyword id="KW-0963">Cytoplasm</keyword>
<keyword id="KW-0486">Methionine biosynthesis</keyword>
<keyword id="KW-1185">Reference proteome</keyword>
<keyword id="KW-0808">Transferase</keyword>
<feature type="chain" id="PRO_0000155708" description="Homoserine O-succinyltransferase">
    <location>
        <begin position="1"/>
        <end position="381"/>
    </location>
</feature>
<feature type="domain" description="AB hydrolase-1" evidence="1">
    <location>
        <begin position="45"/>
        <end position="360"/>
    </location>
</feature>
<feature type="active site" description="Nucleophile" evidence="1">
    <location>
        <position position="151"/>
    </location>
</feature>
<feature type="active site" evidence="1">
    <location>
        <position position="321"/>
    </location>
</feature>
<feature type="active site" evidence="1">
    <location>
        <position position="354"/>
    </location>
</feature>
<feature type="binding site" evidence="1">
    <location>
        <position position="221"/>
    </location>
    <ligand>
        <name>substrate</name>
    </ligand>
</feature>
<feature type="binding site" evidence="1">
    <location>
        <position position="355"/>
    </location>
    <ligand>
        <name>substrate</name>
    </ligand>
</feature>
<feature type="site" description="Important for acyl-CoA specificity" evidence="1">
    <location>
        <position position="323"/>
    </location>
</feature>
<dbReference type="EC" id="2.3.1.46" evidence="1"/>
<dbReference type="EMBL" id="CP000010">
    <property type="protein sequence ID" value="AAU48395.1"/>
    <property type="molecule type" value="Genomic_DNA"/>
</dbReference>
<dbReference type="RefSeq" id="YP_104720.1">
    <property type="nucleotide sequence ID" value="NC_006348.1"/>
</dbReference>
<dbReference type="SMR" id="Q62F07"/>
<dbReference type="ESTHER" id="burma-metx">
    <property type="family name" value="Homoserine_transacetylase"/>
</dbReference>
<dbReference type="KEGG" id="bma:BMA3246"/>
<dbReference type="PATRIC" id="fig|243160.12.peg.3326"/>
<dbReference type="eggNOG" id="COG2021">
    <property type="taxonomic scope" value="Bacteria"/>
</dbReference>
<dbReference type="HOGENOM" id="CLU_028760_1_2_4"/>
<dbReference type="UniPathway" id="UPA00051">
    <property type="reaction ID" value="UER00075"/>
</dbReference>
<dbReference type="Proteomes" id="UP000006693">
    <property type="component" value="Chromosome 1"/>
</dbReference>
<dbReference type="GO" id="GO:0005737">
    <property type="term" value="C:cytoplasm"/>
    <property type="evidence" value="ECO:0007669"/>
    <property type="project" value="UniProtKB-SubCell"/>
</dbReference>
<dbReference type="GO" id="GO:0004414">
    <property type="term" value="F:homoserine O-acetyltransferase activity"/>
    <property type="evidence" value="ECO:0007669"/>
    <property type="project" value="TreeGrafter"/>
</dbReference>
<dbReference type="GO" id="GO:0008899">
    <property type="term" value="F:homoserine O-succinyltransferase activity"/>
    <property type="evidence" value="ECO:0007669"/>
    <property type="project" value="UniProtKB-UniRule"/>
</dbReference>
<dbReference type="GO" id="GO:0009092">
    <property type="term" value="P:homoserine metabolic process"/>
    <property type="evidence" value="ECO:0007669"/>
    <property type="project" value="TreeGrafter"/>
</dbReference>
<dbReference type="GO" id="GO:0009086">
    <property type="term" value="P:methionine biosynthetic process"/>
    <property type="evidence" value="ECO:0007669"/>
    <property type="project" value="UniProtKB-UniRule"/>
</dbReference>
<dbReference type="FunFam" id="1.10.1740.110:FF:000001">
    <property type="entry name" value="Homoserine O-acetyltransferase"/>
    <property type="match status" value="1"/>
</dbReference>
<dbReference type="Gene3D" id="1.10.1740.110">
    <property type="match status" value="1"/>
</dbReference>
<dbReference type="Gene3D" id="3.40.50.1820">
    <property type="entry name" value="alpha/beta hydrolase"/>
    <property type="match status" value="1"/>
</dbReference>
<dbReference type="HAMAP" id="MF_00296">
    <property type="entry name" value="MetX_acyltransf"/>
    <property type="match status" value="1"/>
</dbReference>
<dbReference type="InterPro" id="IPR000073">
    <property type="entry name" value="AB_hydrolase_1"/>
</dbReference>
<dbReference type="InterPro" id="IPR029058">
    <property type="entry name" value="AB_hydrolase_fold"/>
</dbReference>
<dbReference type="InterPro" id="IPR008220">
    <property type="entry name" value="HAT_MetX-like"/>
</dbReference>
<dbReference type="NCBIfam" id="TIGR01392">
    <property type="entry name" value="homoserO_Ac_trn"/>
    <property type="match status" value="1"/>
</dbReference>
<dbReference type="NCBIfam" id="NF001209">
    <property type="entry name" value="PRK00175.1"/>
    <property type="match status" value="1"/>
</dbReference>
<dbReference type="PANTHER" id="PTHR32268">
    <property type="entry name" value="HOMOSERINE O-ACETYLTRANSFERASE"/>
    <property type="match status" value="1"/>
</dbReference>
<dbReference type="PANTHER" id="PTHR32268:SF11">
    <property type="entry name" value="HOMOSERINE O-ACETYLTRANSFERASE"/>
    <property type="match status" value="1"/>
</dbReference>
<dbReference type="Pfam" id="PF00561">
    <property type="entry name" value="Abhydrolase_1"/>
    <property type="match status" value="1"/>
</dbReference>
<dbReference type="PIRSF" id="PIRSF000443">
    <property type="entry name" value="Homoser_Ac_trans"/>
    <property type="match status" value="1"/>
</dbReference>
<dbReference type="SUPFAM" id="SSF53474">
    <property type="entry name" value="alpha/beta-Hydrolases"/>
    <property type="match status" value="1"/>
</dbReference>
<comment type="function">
    <text evidence="1">Transfers a succinyl group from succinyl-CoA to L-homoserine, forming succinyl-L-homoserine.</text>
</comment>
<comment type="catalytic activity">
    <reaction evidence="1">
        <text>L-homoserine + succinyl-CoA = O-succinyl-L-homoserine + CoA</text>
        <dbReference type="Rhea" id="RHEA:22008"/>
        <dbReference type="ChEBI" id="CHEBI:57287"/>
        <dbReference type="ChEBI" id="CHEBI:57292"/>
        <dbReference type="ChEBI" id="CHEBI:57476"/>
        <dbReference type="ChEBI" id="CHEBI:57661"/>
        <dbReference type="EC" id="2.3.1.46"/>
    </reaction>
</comment>
<comment type="pathway">
    <text evidence="1">Amino-acid biosynthesis; L-methionine biosynthesis via de novo pathway; O-succinyl-L-homoserine from L-homoserine: step 1/1.</text>
</comment>
<comment type="subunit">
    <text evidence="1">Homodimer.</text>
</comment>
<comment type="subcellular location">
    <subcellularLocation>
        <location evidence="1">Cytoplasm</location>
    </subcellularLocation>
</comment>
<comment type="similarity">
    <text evidence="1">Belongs to the AB hydrolase superfamily. MetX family.</text>
</comment>
<gene>
    <name evidence="1" type="primary">metXS</name>
    <name type="ordered locus">BMA3246</name>
</gene>
<reference key="1">
    <citation type="journal article" date="2004" name="Proc. Natl. Acad. Sci. U.S.A.">
        <title>Structural flexibility in the Burkholderia mallei genome.</title>
        <authorList>
            <person name="Nierman W.C."/>
            <person name="DeShazer D."/>
            <person name="Kim H.S."/>
            <person name="Tettelin H."/>
            <person name="Nelson K.E."/>
            <person name="Feldblyum T.V."/>
            <person name="Ulrich R.L."/>
            <person name="Ronning C.M."/>
            <person name="Brinkac L.M."/>
            <person name="Daugherty S.C."/>
            <person name="Davidsen T.D."/>
            <person name="DeBoy R.T."/>
            <person name="Dimitrov G."/>
            <person name="Dodson R.J."/>
            <person name="Durkin A.S."/>
            <person name="Gwinn M.L."/>
            <person name="Haft D.H."/>
            <person name="Khouri H.M."/>
            <person name="Kolonay J.F."/>
            <person name="Madupu R."/>
            <person name="Mohammoud Y."/>
            <person name="Nelson W.C."/>
            <person name="Radune D."/>
            <person name="Romero C.M."/>
            <person name="Sarria S."/>
            <person name="Selengut J."/>
            <person name="Shamblin C."/>
            <person name="Sullivan S.A."/>
            <person name="White O."/>
            <person name="Yu Y."/>
            <person name="Zafar N."/>
            <person name="Zhou L."/>
            <person name="Fraser C.M."/>
        </authorList>
    </citation>
    <scope>NUCLEOTIDE SEQUENCE [LARGE SCALE GENOMIC DNA]</scope>
    <source>
        <strain>ATCC 23344</strain>
    </source>
</reference>
<organism>
    <name type="scientific">Burkholderia mallei (strain ATCC 23344)</name>
    <dbReference type="NCBI Taxonomy" id="243160"/>
    <lineage>
        <taxon>Bacteria</taxon>
        <taxon>Pseudomonadati</taxon>
        <taxon>Pseudomonadota</taxon>
        <taxon>Betaproteobacteria</taxon>
        <taxon>Burkholderiales</taxon>
        <taxon>Burkholderiaceae</taxon>
        <taxon>Burkholderia</taxon>
        <taxon>pseudomallei group</taxon>
    </lineage>
</organism>
<sequence length="381" mass="42018">MESIGVVAPHTMHFAEPLRLQSGSVLGNYQLVVETYGELNAARSNAVLVCHALNASHHVAGVYADDPRSTGWWDNMVGPGKPLDTNRFFVIGVNNLGSCFGSTGPMSIDPATGTPYGARFPVVTVEDWVHAQARVADAFGIERFAAVMGGSLGGMQALAWSLLYPERVAHCIDIASTPKLSAQNIAFNEVARSAILSDPDFHGGDYYAHGVKPRRGLRVARMIGHITYLSDDDMAEKFGRALRRADGALDAYNFNFDVEFEVESYLRYQGDKFADYFDANTYLLITRALDYFDPAKAFNGDLSAALAHTKAKYLIASFMTDWRFAPARSREIVKALLDNRRSVSYAEIDAPHGHDAFLLDDARYHNLVRAYYERIAEEVGA</sequence>
<proteinExistence type="inferred from homology"/>
<evidence type="ECO:0000255" key="1">
    <source>
        <dbReference type="HAMAP-Rule" id="MF_00296"/>
    </source>
</evidence>